<dbReference type="EMBL" id="X14899">
    <property type="protein sequence ID" value="CAA33028.1"/>
    <property type="molecule type" value="Genomic_DNA"/>
</dbReference>
<dbReference type="EMBL" id="Z19594">
    <property type="protein sequence ID" value="CAA79649.1"/>
    <property type="molecule type" value="Genomic_DNA"/>
</dbReference>
<dbReference type="PIR" id="S33425">
    <property type="entry name" value="S33425"/>
</dbReference>
<dbReference type="SMR" id="P15482"/>
<dbReference type="OMA" id="SRRIPYG"/>
<dbReference type="GO" id="GO:0003677">
    <property type="term" value="F:DNA binding"/>
    <property type="evidence" value="ECO:0007669"/>
    <property type="project" value="UniProtKB-KW"/>
</dbReference>
<dbReference type="GO" id="GO:0006310">
    <property type="term" value="P:DNA recombination"/>
    <property type="evidence" value="ECO:0007669"/>
    <property type="project" value="UniProtKB-KW"/>
</dbReference>
<dbReference type="GO" id="GO:0032359">
    <property type="term" value="P:provirus excision"/>
    <property type="evidence" value="ECO:0007669"/>
    <property type="project" value="UniProtKB-KW"/>
</dbReference>
<dbReference type="InterPro" id="IPR041657">
    <property type="entry name" value="HTH_17"/>
</dbReference>
<dbReference type="InterPro" id="IPR010093">
    <property type="entry name" value="SinI_DNA-bd"/>
</dbReference>
<dbReference type="NCBIfam" id="TIGR01764">
    <property type="entry name" value="excise"/>
    <property type="match status" value="1"/>
</dbReference>
<dbReference type="Pfam" id="PF12728">
    <property type="entry name" value="HTH_17"/>
    <property type="match status" value="1"/>
</dbReference>
<reference key="1">
    <citation type="journal article" date="1989" name="EMBO J.">
        <title>The integrated conjugative plasmid pSAM2 of Streptomyces ambofaciens is related to temperate bacteriophages.</title>
        <authorList>
            <person name="Boccard F."/>
            <person name="Smokvina T."/>
            <person name="Pernodet J.L."/>
            <person name="Friedmann A."/>
            <person name="Guerineau M."/>
        </authorList>
    </citation>
    <scope>NUCLEOTIDE SEQUENCE [GENOMIC DNA]</scope>
    <source>
        <strain>ATCC 23877 / 3486 / DSM 40053 / JCM 4204 / NBRC 12836 / NRRL B-2516</strain>
    </source>
</reference>
<reference key="2">
    <citation type="submission" date="1993-01" db="EMBL/GenBank/DDBJ databases">
        <authorList>
            <person name="Hagege J.M."/>
            <person name="Boccard F."/>
            <person name="Smokvina T."/>
            <person name="Pernodet J.L."/>
            <person name="Friedmann A."/>
            <person name="Guerineau M."/>
        </authorList>
    </citation>
    <scope>NUCLEOTIDE SEQUENCE [GENOMIC DNA]</scope>
    <source>
        <strain>ATCC 23877 / 3486 / DSM 40053 / JCM 4204 / NBRC 12836 / NRRL B-2516</strain>
    </source>
</reference>
<gene>
    <name type="primary">xis</name>
</gene>
<feature type="chain" id="PRO_0000065940" description="Excisionase">
    <location>
        <begin position="1"/>
        <end position="62"/>
    </location>
</feature>
<accession>P15482</accession>
<geneLocation type="plasmid">
    <name>pSAM2</name>
</geneLocation>
<organism>
    <name type="scientific">Streptomyces ambofaciens</name>
    <dbReference type="NCBI Taxonomy" id="1889"/>
    <lineage>
        <taxon>Bacteria</taxon>
        <taxon>Bacillati</taxon>
        <taxon>Actinomycetota</taxon>
        <taxon>Actinomycetes</taxon>
        <taxon>Kitasatosporales</taxon>
        <taxon>Streptomycetaceae</taxon>
        <taxon>Streptomyces</taxon>
    </lineage>
</organism>
<proteinExistence type="predicted"/>
<protein>
    <recommendedName>
        <fullName>Excisionase</fullName>
    </recommendedName>
</protein>
<sequence length="62" mass="6981">MTTVTPELLTVPEVMARLKVGRSKVYDLIRTRRLASIKIDGARRVPTDAVRDFIQDQLGEAI</sequence>
<keyword id="KW-0233">DNA recombination</keyword>
<keyword id="KW-0238">DNA-binding</keyword>
<keyword id="KW-0614">Plasmid</keyword>
<keyword id="KW-1250">Viral genome excision</keyword>
<name>VXIS_STRAM</name>